<reference key="1">
    <citation type="journal article" date="2003" name="Nature">
        <title>The genome sequence of the filamentous fungus Neurospora crassa.</title>
        <authorList>
            <person name="Galagan J.E."/>
            <person name="Calvo S.E."/>
            <person name="Borkovich K.A."/>
            <person name="Selker E.U."/>
            <person name="Read N.D."/>
            <person name="Jaffe D.B."/>
            <person name="FitzHugh W."/>
            <person name="Ma L.-J."/>
            <person name="Smirnov S."/>
            <person name="Purcell S."/>
            <person name="Rehman B."/>
            <person name="Elkins T."/>
            <person name="Engels R."/>
            <person name="Wang S."/>
            <person name="Nielsen C.B."/>
            <person name="Butler J."/>
            <person name="Endrizzi M."/>
            <person name="Qui D."/>
            <person name="Ianakiev P."/>
            <person name="Bell-Pedersen D."/>
            <person name="Nelson M.A."/>
            <person name="Werner-Washburne M."/>
            <person name="Selitrennikoff C.P."/>
            <person name="Kinsey J.A."/>
            <person name="Braun E.L."/>
            <person name="Zelter A."/>
            <person name="Schulte U."/>
            <person name="Kothe G.O."/>
            <person name="Jedd G."/>
            <person name="Mewes H.-W."/>
            <person name="Staben C."/>
            <person name="Marcotte E."/>
            <person name="Greenberg D."/>
            <person name="Roy A."/>
            <person name="Foley K."/>
            <person name="Naylor J."/>
            <person name="Stange-Thomann N."/>
            <person name="Barrett R."/>
            <person name="Gnerre S."/>
            <person name="Kamal M."/>
            <person name="Kamvysselis M."/>
            <person name="Mauceli E.W."/>
            <person name="Bielke C."/>
            <person name="Rudd S."/>
            <person name="Frishman D."/>
            <person name="Krystofova S."/>
            <person name="Rasmussen C."/>
            <person name="Metzenberg R.L."/>
            <person name="Perkins D.D."/>
            <person name="Kroken S."/>
            <person name="Cogoni C."/>
            <person name="Macino G."/>
            <person name="Catcheside D.E.A."/>
            <person name="Li W."/>
            <person name="Pratt R.J."/>
            <person name="Osmani S.A."/>
            <person name="DeSouza C.P.C."/>
            <person name="Glass N.L."/>
            <person name="Orbach M.J."/>
            <person name="Berglund J.A."/>
            <person name="Voelker R."/>
            <person name="Yarden O."/>
            <person name="Plamann M."/>
            <person name="Seiler S."/>
            <person name="Dunlap J.C."/>
            <person name="Radford A."/>
            <person name="Aramayo R."/>
            <person name="Natvig D.O."/>
            <person name="Alex L.A."/>
            <person name="Mannhaupt G."/>
            <person name="Ebbole D.J."/>
            <person name="Freitag M."/>
            <person name="Paulsen I."/>
            <person name="Sachs M.S."/>
            <person name="Lander E.S."/>
            <person name="Nusbaum C."/>
            <person name="Birren B.W."/>
        </authorList>
    </citation>
    <scope>NUCLEOTIDE SEQUENCE [LARGE SCALE GENOMIC DNA]</scope>
    <source>
        <strain>ATCC 24698 / 74-OR23-1A / CBS 708.71 / DSM 1257 / FGSC 987</strain>
    </source>
</reference>
<reference key="2">
    <citation type="journal article" date="2009" name="Curr. Genet.">
        <title>A novel polyketide biosynthesis gene cluster is involved in fruiting body morphogenesis in the filamentous fungi Sordaria macrospora and Neurospora crassa.</title>
        <authorList>
            <person name="Nowrousian M."/>
        </authorList>
    </citation>
    <scope>FUNCTION</scope>
    <scope>DISRUPTION PHENOTYPE</scope>
    <scope>INDUCTION</scope>
</reference>
<reference key="3">
    <citation type="journal article" date="2017" name="Environ. Microbiol.">
        <title>Production of a fungal furocoumarin by a polyketide synthase gene cluster confers the chemo-resistance of Neurospora crassa to the predation by fungivorous arthropods.</title>
        <authorList>
            <person name="Zhao Y."/>
            <person name="Ding J."/>
            <person name="Yuan W."/>
            <person name="Huang J."/>
            <person name="Huang W."/>
            <person name="Wang Y."/>
            <person name="Zheng W."/>
        </authorList>
    </citation>
    <scope>FUNCTION</scope>
    <scope>DISRUPTION PHENOTYPE</scope>
    <scope>INDUCTION</scope>
</reference>
<reference key="4">
    <citation type="journal article" date="2019" name="J. Nat. Prod.">
        <title>Genome mining reveals Neurospora crassa can produce the salicylaldehyde sordarial.</title>
        <authorList>
            <person name="Zhao Z."/>
            <person name="Ying Y."/>
            <person name="Hung Y.S."/>
            <person name="Tang Y."/>
        </authorList>
    </citation>
    <scope>FUNCTION</scope>
    <scope>PATHWAY</scope>
</reference>
<evidence type="ECO:0000255" key="1"/>
<evidence type="ECO:0000255" key="2">
    <source>
        <dbReference type="PROSITE-ProRule" id="PRU00258"/>
    </source>
</evidence>
<evidence type="ECO:0000255" key="3">
    <source>
        <dbReference type="PROSITE-ProRule" id="PRU01348"/>
    </source>
</evidence>
<evidence type="ECO:0000255" key="4">
    <source>
        <dbReference type="PROSITE-ProRule" id="PRU01363"/>
    </source>
</evidence>
<evidence type="ECO:0000255" key="5">
    <source>
        <dbReference type="PROSITE-ProRule" id="PRU10022"/>
    </source>
</evidence>
<evidence type="ECO:0000256" key="6">
    <source>
        <dbReference type="SAM" id="MobiDB-lite"/>
    </source>
</evidence>
<evidence type="ECO:0000269" key="7">
    <source>
    </source>
</evidence>
<evidence type="ECO:0000269" key="8">
    <source>
    </source>
</evidence>
<evidence type="ECO:0000269" key="9">
    <source>
    </source>
</evidence>
<evidence type="ECO:0000303" key="10">
    <source>
    </source>
</evidence>
<evidence type="ECO:0000303" key="11">
    <source>
    </source>
</evidence>
<evidence type="ECO:0000305" key="12">
    <source>
    </source>
</evidence>
<proteinExistence type="evidence at transcript level"/>
<organism>
    <name type="scientific">Neurospora crassa (strain ATCC 24698 / 74-OR23-1A / CBS 708.71 / DSM 1257 / FGSC 987)</name>
    <dbReference type="NCBI Taxonomy" id="367110"/>
    <lineage>
        <taxon>Eukaryota</taxon>
        <taxon>Fungi</taxon>
        <taxon>Dikarya</taxon>
        <taxon>Ascomycota</taxon>
        <taxon>Pezizomycotina</taxon>
        <taxon>Sordariomycetes</taxon>
        <taxon>Sordariomycetidae</taxon>
        <taxon>Sordariales</taxon>
        <taxon>Sordariaceae</taxon>
        <taxon>Neurospora</taxon>
    </lineage>
</organism>
<gene>
    <name evidence="11" type="primary">srdA</name>
    <name type="synonym">pks-6</name>
    <name type="ORF">NCU02918</name>
</gene>
<name>SRDA_NEUCR</name>
<sequence>MAPHSTLDSDYSSGSSTPTSASAAGDGFVDGLNGLNNGRAVDPQEPIAIIGMGCRLPGGSHSSSKLWELLKAGRTAQSRFPPSRFNIDGFYHPNSDRPGSLNMEGGYFIEDDIRGFENSFFGINNLEATYMDPQQRKLLEVVFETFENAGFTLDQVSDANIGCYVGNFVTDFITMQLKDSEYTHRYSATGLGTTILANRISHVFNMKGPSFVIDTACSSSLYCLHAAVAALIAGECDSAIVAGANLIQSPEQQLATMKAGVLSKTSTCHTFDSSADGYGRADGIGAILVKRLSDAIRDGDPIRSVIRGTAINSNGKTNGITLPSADGQEAVIRKAYAQAGLGFNETDYIECHGTGTAVGDPIEVEAVSRVFKKPQGAPLLIGSVKSNLGHSEAASGLSSIIKVAMALEKGEIPPTYGVKNINPKIKTDEWNVQIVTETTPWPKNLPHNAGRLFRRAGVNSFGYGGANAHAILEAPQMHVPVGYNRGSLPASLTRSTLFLPFSGSNTAALERRVTDIAAAIDFENVNIADLAYTLGVKRTHLSTRGYILSGQDTLKDDLKPENLRVALQGKTYSKLPLAFVFTGQGAQWPEMGKELMKEFPSFRRTIQRLDAALQMLPHAPTWTLQGAILEPAKTSMINHASRSQPVCTAVQIALVQLLASWGIKPESVIGHSSGEIAAAYTAGYLTPEQSIIIAYYRGHCVTKSTMVGAMMAAGLGAEDANKKISELDLVGKIRVACVNSPESVTISGDTEGIETLRAQFDQAGTFARVLKTDGKAYHSHHMAVIGQEYEDLLTEALDGDDFPTTSNGVRFISSVTDAVVNHAVGPAYWRANLESPVLFANVVERLIKDTASHLVELGPHSALELPIKQTRTKLNISETKVHYGSALSRGKNSITTILNLVGDLFLHGHDISFKGVNYVDSAFNSPKARKNVKTQEKMLLDLPNYTWDYSGTVFNESRVSVEWRNRKYPRHDLLGSQVHGGNGISTNWRNVVKAKDIPWMEGHKLDTTTVFPAAGYLAMAVEAMCQVADVTKEQEPALSLRNVNITKALTLGSEETDAGVELFTTLYPAQLPGGATDAGWYQFNISSYTNGTATTHANGLVKIDSAPAPLEVNLPIVPSTMEPQAPRTWYGKFAKGGLNFQGQFQSLTEIQNPRKKENPHTLAKTELRQGGGSGPSTESEYLIHPITIDALFQAGIIASTSGVVRELRAKVPVHIEEMHLRAPVGGQKELKVNATSEAVGFGTIRVDGELFDDEGRVFLQINRCRQVSYQSGIQQEAGDERHPMLRVVWKPDVTRLGAGDAKEFSQYIEQYAAKSESKVDDATVRLGAALDLLIHKHPRLRILNLDVNLTEFLVDTLRLETDFKKCKTLVSGSYSEDGTLTFEDLTNEGKTSTAAQVFDVVILGSKAQELEAAKELVDENGSIIVNGSPADADKLQTLGFTTLQAPSDTILAQTPQEITAKQQKTLSKQVLIVERNADHVLNSAIAAQAKKITGLEAKRIPLESVTADIIAAHTRVISTIELENPVLSRVTEDEMKHIKTLTDNCTNLVWVTGGRLFQSASPEHAVVYGLSRALMLEQPSLRFFVVDVDHEGTPVERSAKHVVEVLQQALIEADPDYEFVQNAGLLHVSRFVPEETLNRVFREKQGAEKLALPLKDARPFRLGTDMVGQIDSIFFRREEAKDVQLADGHVEVSVKAVGLNTKDLQAINGDGDNTSGSFCTSQYTAVVANVGTGVENLAVGDRVVVMTPGYFATTESVPAWACQKLADNEDFTTLSSVPLQLSTAIYAVNNRAHVQAGESVLVITGSDIAADQAAIRVAQLAGAEVFAVGESTNLPSERVFTKGDKALVAKLLKATEGRGVDVVLNFANDAAPISSIGNVFADCGRLVHVGKSSLAEAIATDSTLFRKSVTVTTFDIANILSLKTVAGQKIRSQLLADSIALYRQGQLNLASSPKVFDVSEVRDAFRALAAKGHSGSVVVSLENEASLVPTLPLKYDTVLSPEKSYLLVGCLGGLGRSMSKWMLARGARKFVFMGRSGTDRAPARRLVEDLELAGAQVTVVRGDVINMEDVELAVNGIDGPIGGVIQAAMGLDEALFTTMPRDYWLTGLKPKIVGSWNLHNAIRGRDSELDFFLMTSSISGSVGTATESNYCSANYFLDVFARHRHSLGLPATSIGLGMISEVGYLHENPEIEAMLLRKGIQAINEDEMLQIIDASLATPTAVPGSYDELARAHVLTGLEPLGLKELRAKGFEGTSPVLGDPRASLLSAALDESTDAASSNAASGMPAEVAEAIATGASVEDAVLKMISKKFSNLVLIPEDKLNLTKPISEVGVDSMLAAEFRAWIFQAFKVDVPYLTLLSAAATLTLLSELITKKMMEAQDA</sequence>
<accession>Q7SHI6</accession>
<protein>
    <recommendedName>
        <fullName evidence="11">Highly reducing polyketide synthase srdA</fullName>
        <shortName evidence="11">HRPKS sdrA</shortName>
        <ecNumber evidence="12">2.3.1.-</ecNumber>
    </recommendedName>
    <alternativeName>
        <fullName evidence="10">Polyketide synthase gene cluster 6 protein pks-6</fullName>
    </alternativeName>
    <alternativeName>
        <fullName evidence="11">Sordarial biosynthesis cluster protein srdA</fullName>
    </alternativeName>
</protein>
<keyword id="KW-0012">Acyltransferase</keyword>
<keyword id="KW-0511">Multifunctional enzyme</keyword>
<keyword id="KW-0521">NADP</keyword>
<keyword id="KW-0560">Oxidoreductase</keyword>
<keyword id="KW-0596">Phosphopantetheine</keyword>
<keyword id="KW-0597">Phosphoprotein</keyword>
<keyword id="KW-1185">Reference proteome</keyword>
<keyword id="KW-0808">Transferase</keyword>
<dbReference type="EC" id="2.3.1.-" evidence="12"/>
<dbReference type="EMBL" id="CM002236">
    <property type="protein sequence ID" value="EAA36364.1"/>
    <property type="molecule type" value="Genomic_DNA"/>
</dbReference>
<dbReference type="RefSeq" id="XP_965600.1">
    <property type="nucleotide sequence ID" value="XM_960507.1"/>
</dbReference>
<dbReference type="SMR" id="Q7SHI6"/>
<dbReference type="STRING" id="367110.Q7SHI6"/>
<dbReference type="PaxDb" id="5141-EFNCRP00000002314"/>
<dbReference type="EnsemblFungi" id="EAA36364">
    <property type="protein sequence ID" value="EAA36364"/>
    <property type="gene ID" value="NCU02918"/>
</dbReference>
<dbReference type="GeneID" id="3881725"/>
<dbReference type="KEGG" id="ncr:NCU02918"/>
<dbReference type="VEuPathDB" id="FungiDB:NCU02918"/>
<dbReference type="HOGENOM" id="CLU_000022_31_4_1"/>
<dbReference type="InParanoid" id="Q7SHI6"/>
<dbReference type="OMA" id="TSACHTF"/>
<dbReference type="OrthoDB" id="329835at2759"/>
<dbReference type="Proteomes" id="UP000001805">
    <property type="component" value="Chromosome 1, Linkage Group I"/>
</dbReference>
<dbReference type="GO" id="GO:0004315">
    <property type="term" value="F:3-oxoacyl-[acyl-carrier-protein] synthase activity"/>
    <property type="evidence" value="ECO:0007669"/>
    <property type="project" value="InterPro"/>
</dbReference>
<dbReference type="GO" id="GO:0004312">
    <property type="term" value="F:fatty acid synthase activity"/>
    <property type="evidence" value="ECO:0000318"/>
    <property type="project" value="GO_Central"/>
</dbReference>
<dbReference type="GO" id="GO:0016491">
    <property type="term" value="F:oxidoreductase activity"/>
    <property type="evidence" value="ECO:0007669"/>
    <property type="project" value="UniProtKB-KW"/>
</dbReference>
<dbReference type="GO" id="GO:0006633">
    <property type="term" value="P:fatty acid biosynthetic process"/>
    <property type="evidence" value="ECO:0000318"/>
    <property type="project" value="GO_Central"/>
</dbReference>
<dbReference type="GO" id="GO:0044550">
    <property type="term" value="P:secondary metabolite biosynthetic process"/>
    <property type="evidence" value="ECO:0000318"/>
    <property type="project" value="GO_Central"/>
</dbReference>
<dbReference type="CDD" id="cd05195">
    <property type="entry name" value="enoyl_red"/>
    <property type="match status" value="1"/>
</dbReference>
<dbReference type="CDD" id="cd00833">
    <property type="entry name" value="PKS"/>
    <property type="match status" value="1"/>
</dbReference>
<dbReference type="Gene3D" id="3.40.47.10">
    <property type="match status" value="1"/>
</dbReference>
<dbReference type="Gene3D" id="3.40.366.10">
    <property type="entry name" value="Malonyl-Coenzyme A Acyl Carrier Protein, domain 2"/>
    <property type="match status" value="1"/>
</dbReference>
<dbReference type="Gene3D" id="3.90.180.10">
    <property type="entry name" value="Medium-chain alcohol dehydrogenases, catalytic domain"/>
    <property type="match status" value="1"/>
</dbReference>
<dbReference type="Gene3D" id="3.40.50.720">
    <property type="entry name" value="NAD(P)-binding Rossmann-like Domain"/>
    <property type="match status" value="2"/>
</dbReference>
<dbReference type="Gene3D" id="3.10.129.110">
    <property type="entry name" value="Polyketide synthase dehydratase"/>
    <property type="match status" value="1"/>
</dbReference>
<dbReference type="InterPro" id="IPR001227">
    <property type="entry name" value="Ac_transferase_dom_sf"/>
</dbReference>
<dbReference type="InterPro" id="IPR036736">
    <property type="entry name" value="ACP-like_sf"/>
</dbReference>
<dbReference type="InterPro" id="IPR014043">
    <property type="entry name" value="Acyl_transferase_dom"/>
</dbReference>
<dbReference type="InterPro" id="IPR016035">
    <property type="entry name" value="Acyl_Trfase/lysoPLipase"/>
</dbReference>
<dbReference type="InterPro" id="IPR013154">
    <property type="entry name" value="ADH-like_N"/>
</dbReference>
<dbReference type="InterPro" id="IPR011032">
    <property type="entry name" value="GroES-like_sf"/>
</dbReference>
<dbReference type="InterPro" id="IPR018201">
    <property type="entry name" value="Ketoacyl_synth_AS"/>
</dbReference>
<dbReference type="InterPro" id="IPR014031">
    <property type="entry name" value="Ketoacyl_synth_C"/>
</dbReference>
<dbReference type="InterPro" id="IPR014030">
    <property type="entry name" value="Ketoacyl_synth_N"/>
</dbReference>
<dbReference type="InterPro" id="IPR016036">
    <property type="entry name" value="Malonyl_transacylase_ACP-bd"/>
</dbReference>
<dbReference type="InterPro" id="IPR036291">
    <property type="entry name" value="NAD(P)-bd_dom_sf"/>
</dbReference>
<dbReference type="InterPro" id="IPR056501">
    <property type="entry name" value="NAD-bd_HRPKS_sdrA"/>
</dbReference>
<dbReference type="InterPro" id="IPR032821">
    <property type="entry name" value="PKS_assoc"/>
</dbReference>
<dbReference type="InterPro" id="IPR020841">
    <property type="entry name" value="PKS_Beta-ketoAc_synthase_dom"/>
</dbReference>
<dbReference type="InterPro" id="IPR042104">
    <property type="entry name" value="PKS_dehydratase_sf"/>
</dbReference>
<dbReference type="InterPro" id="IPR020807">
    <property type="entry name" value="PKS_DH"/>
</dbReference>
<dbReference type="InterPro" id="IPR049551">
    <property type="entry name" value="PKS_DH_C"/>
</dbReference>
<dbReference type="InterPro" id="IPR049552">
    <property type="entry name" value="PKS_DH_N"/>
</dbReference>
<dbReference type="InterPro" id="IPR020843">
    <property type="entry name" value="PKS_ER"/>
</dbReference>
<dbReference type="InterPro" id="IPR013968">
    <property type="entry name" value="PKS_KR"/>
</dbReference>
<dbReference type="InterPro" id="IPR049900">
    <property type="entry name" value="PKS_mFAS_DH"/>
</dbReference>
<dbReference type="InterPro" id="IPR050091">
    <property type="entry name" value="PKS_NRPS_Biosynth_Enz"/>
</dbReference>
<dbReference type="InterPro" id="IPR009081">
    <property type="entry name" value="PP-bd_ACP"/>
</dbReference>
<dbReference type="InterPro" id="IPR016039">
    <property type="entry name" value="Thiolase-like"/>
</dbReference>
<dbReference type="PANTHER" id="PTHR43775">
    <property type="entry name" value="FATTY ACID SYNTHASE"/>
    <property type="match status" value="1"/>
</dbReference>
<dbReference type="PANTHER" id="PTHR43775:SF50">
    <property type="entry name" value="HIGHLY REDUCING POLYKETIDE SYNTHASE SRDA"/>
    <property type="match status" value="1"/>
</dbReference>
<dbReference type="Pfam" id="PF23297">
    <property type="entry name" value="ACP_SdgA_C"/>
    <property type="match status" value="1"/>
</dbReference>
<dbReference type="Pfam" id="PF00698">
    <property type="entry name" value="Acyl_transf_1"/>
    <property type="match status" value="1"/>
</dbReference>
<dbReference type="Pfam" id="PF08240">
    <property type="entry name" value="ADH_N"/>
    <property type="match status" value="1"/>
</dbReference>
<dbReference type="Pfam" id="PF13602">
    <property type="entry name" value="ADH_zinc_N_2"/>
    <property type="match status" value="1"/>
</dbReference>
<dbReference type="Pfam" id="PF16197">
    <property type="entry name" value="KAsynt_C_assoc"/>
    <property type="match status" value="1"/>
</dbReference>
<dbReference type="Pfam" id="PF00109">
    <property type="entry name" value="ketoacyl-synt"/>
    <property type="match status" value="1"/>
</dbReference>
<dbReference type="Pfam" id="PF02801">
    <property type="entry name" value="Ketoacyl-synt_C"/>
    <property type="match status" value="1"/>
</dbReference>
<dbReference type="Pfam" id="PF08659">
    <property type="entry name" value="KR"/>
    <property type="match status" value="1"/>
</dbReference>
<dbReference type="Pfam" id="PF23114">
    <property type="entry name" value="NAD-bd_HRPKS_sdrA"/>
    <property type="match status" value="1"/>
</dbReference>
<dbReference type="Pfam" id="PF21089">
    <property type="entry name" value="PKS_DH_N"/>
    <property type="match status" value="1"/>
</dbReference>
<dbReference type="Pfam" id="PF14765">
    <property type="entry name" value="PS-DH"/>
    <property type="match status" value="1"/>
</dbReference>
<dbReference type="SMART" id="SM00827">
    <property type="entry name" value="PKS_AT"/>
    <property type="match status" value="1"/>
</dbReference>
<dbReference type="SMART" id="SM00826">
    <property type="entry name" value="PKS_DH"/>
    <property type="match status" value="1"/>
</dbReference>
<dbReference type="SMART" id="SM00829">
    <property type="entry name" value="PKS_ER"/>
    <property type="match status" value="1"/>
</dbReference>
<dbReference type="SMART" id="SM00822">
    <property type="entry name" value="PKS_KR"/>
    <property type="match status" value="1"/>
</dbReference>
<dbReference type="SMART" id="SM00825">
    <property type="entry name" value="PKS_KS"/>
    <property type="match status" value="1"/>
</dbReference>
<dbReference type="SUPFAM" id="SSF47336">
    <property type="entry name" value="ACP-like"/>
    <property type="match status" value="1"/>
</dbReference>
<dbReference type="SUPFAM" id="SSF52151">
    <property type="entry name" value="FabD/lysophospholipase-like"/>
    <property type="match status" value="1"/>
</dbReference>
<dbReference type="SUPFAM" id="SSF50129">
    <property type="entry name" value="GroES-like"/>
    <property type="match status" value="1"/>
</dbReference>
<dbReference type="SUPFAM" id="SSF51735">
    <property type="entry name" value="NAD(P)-binding Rossmann-fold domains"/>
    <property type="match status" value="3"/>
</dbReference>
<dbReference type="SUPFAM" id="SSF55048">
    <property type="entry name" value="Probable ACP-binding domain of malonyl-CoA ACP transacylase"/>
    <property type="match status" value="1"/>
</dbReference>
<dbReference type="SUPFAM" id="SSF53901">
    <property type="entry name" value="Thiolase-like"/>
    <property type="match status" value="1"/>
</dbReference>
<dbReference type="PROSITE" id="PS50075">
    <property type="entry name" value="CARRIER"/>
    <property type="match status" value="1"/>
</dbReference>
<dbReference type="PROSITE" id="PS00606">
    <property type="entry name" value="KS3_1"/>
    <property type="match status" value="1"/>
</dbReference>
<dbReference type="PROSITE" id="PS52004">
    <property type="entry name" value="KS3_2"/>
    <property type="match status" value="1"/>
</dbReference>
<dbReference type="PROSITE" id="PS52019">
    <property type="entry name" value="PKS_MFAS_DH"/>
    <property type="match status" value="1"/>
</dbReference>
<feature type="chain" id="PRO_0000449326" description="Highly reducing polyketide synthase srdA">
    <location>
        <begin position="1"/>
        <end position="2382"/>
    </location>
</feature>
<feature type="domain" description="Ketosynthase family 3 (KS3)" evidence="3">
    <location>
        <begin position="44"/>
        <end position="474"/>
    </location>
</feature>
<feature type="domain" description="PKS/mFAS DH" evidence="4">
    <location>
        <begin position="971"/>
        <end position="1275"/>
    </location>
</feature>
<feature type="domain" description="Carrier" evidence="2">
    <location>
        <begin position="2298"/>
        <end position="2376"/>
    </location>
</feature>
<feature type="region of interest" description="Disordered" evidence="6">
    <location>
        <begin position="1"/>
        <end position="25"/>
    </location>
</feature>
<feature type="region of interest" description="Malonyl-CoA:ACP transacylase (MAT) domain" evidence="1">
    <location>
        <begin position="580"/>
        <end position="891"/>
    </location>
</feature>
<feature type="region of interest" description="Dehydratase (DH) domain" evidence="1">
    <location>
        <begin position="971"/>
        <end position="1274"/>
    </location>
</feature>
<feature type="region of interest" description="N-terminal hotdog fold" evidence="4">
    <location>
        <begin position="971"/>
        <end position="1108"/>
    </location>
</feature>
<feature type="region of interest" description="C-terminal hotdog fold" evidence="4">
    <location>
        <begin position="1121"/>
        <end position="1275"/>
    </location>
</feature>
<feature type="region of interest" description="Enoyl reductase (ER) domain" evidence="1">
    <location>
        <begin position="1668"/>
        <end position="1979"/>
    </location>
</feature>
<feature type="region of interest" description="Ketoreductase (KR) domain" evidence="1">
    <location>
        <begin position="2004"/>
        <end position="2180"/>
    </location>
</feature>
<feature type="active site" description="For beta-ketoacyl synthase activity" evidence="3">
    <location>
        <position position="217"/>
    </location>
</feature>
<feature type="active site" description="For beta-ketoacyl synthase activity" evidence="3">
    <location>
        <position position="352"/>
    </location>
</feature>
<feature type="active site" description="For beta-ketoacyl synthase activity" evidence="3">
    <location>
        <position position="390"/>
    </location>
</feature>
<feature type="active site" description="For malonyltransferase activity" evidence="5">
    <location>
        <position position="672"/>
    </location>
</feature>
<feature type="active site" description="Proton acceptor; for dehydratase activity" evidence="4">
    <location>
        <position position="1003"/>
    </location>
</feature>
<feature type="active site" description="Proton donor; for dehydratase activity" evidence="4">
    <location>
        <position position="1189"/>
    </location>
</feature>
<feature type="modified residue" description="O-(pantetheine 4'-phosphoryl)serine" evidence="2">
    <location>
        <position position="2335"/>
    </location>
</feature>
<comment type="function">
    <text evidence="7 8 9">Highly reducing polyketide synthase; part of the gene cluster that mediates the biosynthesis of sordarial, a salicylic aldehyde structurally related to the phytotoxin pyriculol (PubMed:19277664, PubMed:28485098, PubMed:30908040). The most interesting aspect of this pathway is formation of an aromatic product from the highly reducing polyketide synthase srdA (PubMed:30908040). SrdA synthesizes a reduced polyketide chain from one molecule of acetyl-CoA and five molecules of malonyl-CoA (PubMed:30908040). The polyketide chain is then reductively released as an aldehyde (PubMed:30908040). The oxidoreductases srdC, srdD and srdE then oxidize one of the hydroxy groups to facilitate the intramolecular aldol condensation, followed by dehydration to yield a salicylic aldehyde (PubMed:30908040). This aldehyde can undergo facile reduction by endogenous reductases to yield the alcohol 1-hydroxy-2-hydroxymethyl-3-pent-1,3-dienylbenzene (PubMed:30908040). The flavin-dependent srdI counteract against the propensity of the aldehydes to be reduced under physiological conditions and is responsible for reoxidizing 1-hydroxy-2-hydroxymethyl-3-pent-1,3-dienylbenzene back to the salicylic aldehyde (PubMed:30908040). This salicylic aldehyde is then selectively epoxidized by the cupin-domain-containing oxidoreductase srdB to yield the epoxide, which can be hydrolyzed stereoselectively by the hydrolase srdG to give the final product sordarial (PubMed:30908040).</text>
</comment>
<comment type="induction">
    <text evidence="7 8">Expression is up-regulated during sexual development (PubMed:19277664). Expression is also up-regulated during confrontation with the arthropod fungivore Drosophila melanogaster (PubMed:28485098).</text>
</comment>
<comment type="domain">
    <text evidence="12">Multidomain protein; including a ketosynthase (KS) that catalyzes repeated decarboxylative condensation to elongate the polyketide backbone; a malonyl-CoA:ACP transacylase (MAT) that selects and transfers the extender unit malonyl-CoA; a dehydratase (DH) domain that reduces hydroxyl groups to enoyl groups; an enoyl reductase (ER) domain that reduces enoyl groups to alkyl group; a ketoreductase (KR) domain that catalyzes beta-ketoreduction steps; and an acyl-carrier protein (ACP) that serves as the tether of the growing and completed polyketide via its phosphopantetheinyl arm.</text>
</comment>
<comment type="disruption phenotype">
    <text evidence="7 8">Abolishes the production of the insecticidal furocoumarin neurosporin A (PubMed:28485098). Does not affect the fruiting body development and leads to normal fertility (PubMed:19277664).</text>
</comment>
<comment type="caution">
    <text evidence="8 9">A recent genetics report associated srdA and its cluster with the biosynthesis of furanocoumarin neurosporin A, a metabolite produced by N.crassa for chemoresistance against predation by arthropod fungivores (PubMed:28485098). However, based on the gene cluster organization and predicted gene functions, this cluster is unlikely to be involved in neurosporin A biosynthesis, but instead produces compounds similar to pyriculol (PubMed:30908040).</text>
</comment>